<comment type="function">
    <text evidence="1">Binds 23S rRNA and is also seen to make contacts with the A and possibly P site tRNAs.</text>
</comment>
<comment type="subunit">
    <text evidence="1">Part of the 50S ribosomal subunit.</text>
</comment>
<comment type="similarity">
    <text evidence="1">Belongs to the universal ribosomal protein uL16 family.</text>
</comment>
<proteinExistence type="inferred from homology"/>
<keyword id="KW-0687">Ribonucleoprotein</keyword>
<keyword id="KW-0689">Ribosomal protein</keyword>
<keyword id="KW-0694">RNA-binding</keyword>
<keyword id="KW-0699">rRNA-binding</keyword>
<keyword id="KW-0820">tRNA-binding</keyword>
<organism>
    <name type="scientific">Pediococcus pentosaceus (strain ATCC 25745 / CCUG 21536 / LMG 10740 / 183-1w)</name>
    <dbReference type="NCBI Taxonomy" id="278197"/>
    <lineage>
        <taxon>Bacteria</taxon>
        <taxon>Bacillati</taxon>
        <taxon>Bacillota</taxon>
        <taxon>Bacilli</taxon>
        <taxon>Lactobacillales</taxon>
        <taxon>Lactobacillaceae</taxon>
        <taxon>Pediococcus</taxon>
    </lineage>
</organism>
<feature type="chain" id="PRO_1000054670" description="Large ribosomal subunit protein uL16">
    <location>
        <begin position="1"/>
        <end position="144"/>
    </location>
</feature>
<sequence length="144" mass="16032">MLVPKRVKHRREHRGRMRGAAKGGKTVAFGEYGLQALTSSWITNRQIEAARVAMTRYMKRGGKVWIKIFPHKSYTSKGVGVRMGNGKGTPEGWVAPVKREKVMFEVAGVPEEVAREALRLAAMKLPVKTKIIEREEVGGESDEG</sequence>
<accession>Q03EC3</accession>
<reference key="1">
    <citation type="journal article" date="2006" name="Proc. Natl. Acad. Sci. U.S.A.">
        <title>Comparative genomics of the lactic acid bacteria.</title>
        <authorList>
            <person name="Makarova K.S."/>
            <person name="Slesarev A."/>
            <person name="Wolf Y.I."/>
            <person name="Sorokin A."/>
            <person name="Mirkin B."/>
            <person name="Koonin E.V."/>
            <person name="Pavlov A."/>
            <person name="Pavlova N."/>
            <person name="Karamychev V."/>
            <person name="Polouchine N."/>
            <person name="Shakhova V."/>
            <person name="Grigoriev I."/>
            <person name="Lou Y."/>
            <person name="Rohksar D."/>
            <person name="Lucas S."/>
            <person name="Huang K."/>
            <person name="Goodstein D.M."/>
            <person name="Hawkins T."/>
            <person name="Plengvidhya V."/>
            <person name="Welker D."/>
            <person name="Hughes J."/>
            <person name="Goh Y."/>
            <person name="Benson A."/>
            <person name="Baldwin K."/>
            <person name="Lee J.-H."/>
            <person name="Diaz-Muniz I."/>
            <person name="Dosti B."/>
            <person name="Smeianov V."/>
            <person name="Wechter W."/>
            <person name="Barabote R."/>
            <person name="Lorca G."/>
            <person name="Altermann E."/>
            <person name="Barrangou R."/>
            <person name="Ganesan B."/>
            <person name="Xie Y."/>
            <person name="Rawsthorne H."/>
            <person name="Tamir D."/>
            <person name="Parker C."/>
            <person name="Breidt F."/>
            <person name="Broadbent J.R."/>
            <person name="Hutkins R."/>
            <person name="O'Sullivan D."/>
            <person name="Steele J."/>
            <person name="Unlu G."/>
            <person name="Saier M.H. Jr."/>
            <person name="Klaenhammer T."/>
            <person name="Richardson P."/>
            <person name="Kozyavkin S."/>
            <person name="Weimer B.C."/>
            <person name="Mills D.A."/>
        </authorList>
    </citation>
    <scope>NUCLEOTIDE SEQUENCE [LARGE SCALE GENOMIC DNA]</scope>
    <source>
        <strain>ATCC 25745 / CCUG 21536 / LMG 10740 / 183-1w</strain>
    </source>
</reference>
<evidence type="ECO:0000255" key="1">
    <source>
        <dbReference type="HAMAP-Rule" id="MF_01342"/>
    </source>
</evidence>
<evidence type="ECO:0000305" key="2"/>
<protein>
    <recommendedName>
        <fullName evidence="1">Large ribosomal subunit protein uL16</fullName>
    </recommendedName>
    <alternativeName>
        <fullName evidence="2">50S ribosomal protein L16</fullName>
    </alternativeName>
</protein>
<dbReference type="EMBL" id="CP000422">
    <property type="protein sequence ID" value="ABJ68449.1"/>
    <property type="molecule type" value="Genomic_DNA"/>
</dbReference>
<dbReference type="RefSeq" id="WP_002833335.1">
    <property type="nucleotide sequence ID" value="NC_008525.1"/>
</dbReference>
<dbReference type="SMR" id="Q03EC3"/>
<dbReference type="STRING" id="278197.PEPE_1411"/>
<dbReference type="GeneID" id="33061312"/>
<dbReference type="KEGG" id="ppe:PEPE_1411"/>
<dbReference type="eggNOG" id="COG0197">
    <property type="taxonomic scope" value="Bacteria"/>
</dbReference>
<dbReference type="HOGENOM" id="CLU_078858_2_1_9"/>
<dbReference type="OrthoDB" id="9802589at2"/>
<dbReference type="Proteomes" id="UP000000773">
    <property type="component" value="Chromosome"/>
</dbReference>
<dbReference type="GO" id="GO:0022625">
    <property type="term" value="C:cytosolic large ribosomal subunit"/>
    <property type="evidence" value="ECO:0007669"/>
    <property type="project" value="TreeGrafter"/>
</dbReference>
<dbReference type="GO" id="GO:0019843">
    <property type="term" value="F:rRNA binding"/>
    <property type="evidence" value="ECO:0007669"/>
    <property type="project" value="UniProtKB-UniRule"/>
</dbReference>
<dbReference type="GO" id="GO:0003735">
    <property type="term" value="F:structural constituent of ribosome"/>
    <property type="evidence" value="ECO:0007669"/>
    <property type="project" value="InterPro"/>
</dbReference>
<dbReference type="GO" id="GO:0000049">
    <property type="term" value="F:tRNA binding"/>
    <property type="evidence" value="ECO:0007669"/>
    <property type="project" value="UniProtKB-KW"/>
</dbReference>
<dbReference type="GO" id="GO:0006412">
    <property type="term" value="P:translation"/>
    <property type="evidence" value="ECO:0007669"/>
    <property type="project" value="UniProtKB-UniRule"/>
</dbReference>
<dbReference type="CDD" id="cd01433">
    <property type="entry name" value="Ribosomal_L16_L10e"/>
    <property type="match status" value="1"/>
</dbReference>
<dbReference type="FunFam" id="3.90.1170.10:FF:000001">
    <property type="entry name" value="50S ribosomal protein L16"/>
    <property type="match status" value="1"/>
</dbReference>
<dbReference type="Gene3D" id="3.90.1170.10">
    <property type="entry name" value="Ribosomal protein L10e/L16"/>
    <property type="match status" value="1"/>
</dbReference>
<dbReference type="HAMAP" id="MF_01342">
    <property type="entry name" value="Ribosomal_uL16"/>
    <property type="match status" value="1"/>
</dbReference>
<dbReference type="InterPro" id="IPR047873">
    <property type="entry name" value="Ribosomal_uL16"/>
</dbReference>
<dbReference type="InterPro" id="IPR000114">
    <property type="entry name" value="Ribosomal_uL16_bact-type"/>
</dbReference>
<dbReference type="InterPro" id="IPR020798">
    <property type="entry name" value="Ribosomal_uL16_CS"/>
</dbReference>
<dbReference type="InterPro" id="IPR016180">
    <property type="entry name" value="Ribosomal_uL16_dom"/>
</dbReference>
<dbReference type="InterPro" id="IPR036920">
    <property type="entry name" value="Ribosomal_uL16_sf"/>
</dbReference>
<dbReference type="NCBIfam" id="TIGR01164">
    <property type="entry name" value="rplP_bact"/>
    <property type="match status" value="1"/>
</dbReference>
<dbReference type="PANTHER" id="PTHR12220">
    <property type="entry name" value="50S/60S RIBOSOMAL PROTEIN L16"/>
    <property type="match status" value="1"/>
</dbReference>
<dbReference type="PANTHER" id="PTHR12220:SF13">
    <property type="entry name" value="LARGE RIBOSOMAL SUBUNIT PROTEIN UL16M"/>
    <property type="match status" value="1"/>
</dbReference>
<dbReference type="Pfam" id="PF00252">
    <property type="entry name" value="Ribosomal_L16"/>
    <property type="match status" value="1"/>
</dbReference>
<dbReference type="PRINTS" id="PR00060">
    <property type="entry name" value="RIBOSOMALL16"/>
</dbReference>
<dbReference type="SUPFAM" id="SSF54686">
    <property type="entry name" value="Ribosomal protein L16p/L10e"/>
    <property type="match status" value="1"/>
</dbReference>
<dbReference type="PROSITE" id="PS00586">
    <property type="entry name" value="RIBOSOMAL_L16_1"/>
    <property type="match status" value="1"/>
</dbReference>
<dbReference type="PROSITE" id="PS00701">
    <property type="entry name" value="RIBOSOMAL_L16_2"/>
    <property type="match status" value="1"/>
</dbReference>
<name>RL16_PEDPA</name>
<gene>
    <name evidence="1" type="primary">rplP</name>
    <name type="ordered locus">PEPE_1411</name>
</gene>